<reference key="1">
    <citation type="journal article" date="1995" name="Virology">
        <title>The DNA sequence of human herpesvirus-6: structure, coding content, and genome evolution.</title>
        <authorList>
            <person name="Gompels U.A."/>
            <person name="Nicholas J."/>
            <person name="Lawrence G.L."/>
            <person name="Jones M."/>
            <person name="Thomson B.J."/>
            <person name="Martin M.E.D."/>
            <person name="Efstathiou S."/>
            <person name="Craxton M.A."/>
            <person name="Macaulay H.A."/>
        </authorList>
    </citation>
    <scope>NUCLEOTIDE SEQUENCE [LARGE SCALE GENOMIC DNA]</scope>
</reference>
<reference key="2">
    <citation type="submission" date="1995-10" db="EMBL/GenBank/DDBJ databases">
        <authorList>
            <person name="Jones M.D."/>
        </authorList>
    </citation>
    <scope>NUCLEOTIDE SEQUENCE [GENOMIC DNA] OF 1-92</scope>
</reference>
<proteinExistence type="inferred from homology"/>
<feature type="chain" id="PRO_0000115882" description="Tripartite terminase subunit 1">
    <location>
        <begin position="1"/>
        <end position="726"/>
    </location>
</feature>
<feature type="zinc finger region" description="C3H1-type" evidence="1">
    <location>
        <begin position="189"/>
        <end position="217"/>
    </location>
</feature>
<feature type="binding site" evidence="1">
    <location>
        <begin position="626"/>
        <end position="633"/>
    </location>
    <ligand>
        <name>ATP</name>
        <dbReference type="ChEBI" id="CHEBI:30616"/>
    </ligand>
</feature>
<keyword id="KW-0067">ATP-binding</keyword>
<keyword id="KW-1048">Host nucleus</keyword>
<keyword id="KW-0426">Late protein</keyword>
<keyword id="KW-0479">Metal-binding</keyword>
<keyword id="KW-0547">Nucleotide-binding</keyword>
<keyword id="KW-1185">Reference proteome</keyword>
<keyword id="KW-0231">Viral genome packaging</keyword>
<keyword id="KW-1188">Viral release from host cell</keyword>
<keyword id="KW-0862">Zinc</keyword>
<keyword id="KW-0863">Zinc-finger</keyword>
<sequence length="726" mass="82914">MNSLQSLCVLCARLNECALDLECLKFCDPVIVLSDMANFKKNGIVILHLYQTFFEGIKEQNLLCASALTVYMQVLLKAMYEQVLLLDAALESFMVDQDRKKYFEKVLCLRRCAEHLSINISLNNGVEFIVQLSTLNDIEQLISKINSVYALLLPQEGLQICGKIIDLLTIMCGACMVAKPESYLETKTCMKCYEELTLTPNQGKSLRRRLHGKFCNHLTEQKAFFNIEKNIETIEKDLGEAILNYGTVQSVATEIKKIFKQQRSAESLHVSDAEKTLKKYNIFSKVPDVIYSLSEFTYWSKISETIVRNVAITLQQLNSCHTLYKQLQNDVSLYLYGEVSEDFLALSENLLTHDERLYVGSIYVSPSRLIDLVTGLSIKNLEESPIFKRLAEEDEVQHKIKSLLHDIRDPQTTETPGRLNTINCMLQTHNLQQEVLARKKAYFQKVSESGYNRVMACIREQESLINKVVSVNVYGNFIFEALSKIMNGFVLRKMYLDGSFRVDSCTYDEHLYIKNNLMPKKLPLELLPDLSEIMYTLLTGPLSDFHKSAYPLPANISMAYGCDHAEMLPHMKEDLARCIEGTIHPSVWMVCEYNEFFNFSGVTDVNDMQKKMWNFIRELTLSVALYNDVFGKRLKIVRIDEEGDLSGNVVLTFNHESPLLFHTGGGMTKFKDVYSLLYCDLQAQLSRETVDVPEGVSYSVRTPNLLDLVRENEQDGSIIPGCLFDE</sequence>
<evidence type="ECO:0000255" key="1">
    <source>
        <dbReference type="HAMAP-Rule" id="MF_04014"/>
    </source>
</evidence>
<accession>P52384</accession>
<organismHost>
    <name type="scientific">Homo sapiens</name>
    <name type="common">Human</name>
    <dbReference type="NCBI Taxonomy" id="9606"/>
</organismHost>
<dbReference type="EMBL" id="X83413">
    <property type="protein sequence ID" value="CAA58374.2"/>
    <property type="molecule type" value="Genomic_DNA"/>
</dbReference>
<dbReference type="EMBL" id="X92436">
    <property type="protein sequence ID" value="CAA63166.1"/>
    <property type="molecule type" value="Genomic_DNA"/>
</dbReference>
<dbReference type="RefSeq" id="NP_042933.1">
    <property type="nucleotide sequence ID" value="NC_001664.2"/>
</dbReference>
<dbReference type="SMR" id="P52384"/>
<dbReference type="DNASU" id="1487918"/>
<dbReference type="GeneID" id="1487918"/>
<dbReference type="KEGG" id="vg:1487918"/>
<dbReference type="Proteomes" id="UP000009295">
    <property type="component" value="Segment"/>
</dbReference>
<dbReference type="GO" id="GO:0042025">
    <property type="term" value="C:host cell nucleus"/>
    <property type="evidence" value="ECO:0007669"/>
    <property type="project" value="UniProtKB-SubCell"/>
</dbReference>
<dbReference type="GO" id="GO:0005524">
    <property type="term" value="F:ATP binding"/>
    <property type="evidence" value="ECO:0007669"/>
    <property type="project" value="UniProtKB-KW"/>
</dbReference>
<dbReference type="GO" id="GO:0008270">
    <property type="term" value="F:zinc ion binding"/>
    <property type="evidence" value="ECO:0007669"/>
    <property type="project" value="UniProtKB-KW"/>
</dbReference>
<dbReference type="GO" id="GO:0019073">
    <property type="term" value="P:viral DNA genome packaging"/>
    <property type="evidence" value="ECO:0007669"/>
    <property type="project" value="InterPro"/>
</dbReference>
<dbReference type="HAMAP" id="MF_04014">
    <property type="entry name" value="HSV_TRM1"/>
    <property type="match status" value="1"/>
</dbReference>
<dbReference type="InterPro" id="IPR000501">
    <property type="entry name" value="UL28/UL56"/>
</dbReference>
<dbReference type="Pfam" id="PF01366">
    <property type="entry name" value="PRTP"/>
    <property type="match status" value="1"/>
</dbReference>
<organism>
    <name type="scientific">Human herpesvirus 6A (strain Uganda-1102)</name>
    <name type="common">HHV-6 variant A</name>
    <name type="synonym">Human B lymphotropic virus</name>
    <dbReference type="NCBI Taxonomy" id="10370"/>
    <lineage>
        <taxon>Viruses</taxon>
        <taxon>Duplodnaviria</taxon>
        <taxon>Heunggongvirae</taxon>
        <taxon>Peploviricota</taxon>
        <taxon>Herviviricetes</taxon>
        <taxon>Herpesvirales</taxon>
        <taxon>Orthoherpesviridae</taxon>
        <taxon>Betaherpesvirinae</taxon>
        <taxon>Roseolovirus</taxon>
        <taxon>Roseolovirus humanbeta6a</taxon>
        <taxon>Human betaherpesvirus 6A</taxon>
    </lineage>
</organism>
<comment type="function">
    <text evidence="1">Component of the molecular motor that translocates viral genomic DNA in empty capsid during DNA packaging. Forms a tripartite terminase complex together with TRM2 and TRM3 in the host cytoplasm. Once the complex reaches the host nucleus, it interacts with the capsid portal vertex. This portal forms a ring in which genomic DNA is translocated into the capsid. TRM1 carries an endonuclease activity that plays an important role for the cleavage of concatemeric viral DNA into unit length genomes.</text>
</comment>
<comment type="subunit">
    <text evidence="1">Associates with TRM2 and TRM3 to form the tripartite terminase complex. Interacts with portal protein.</text>
</comment>
<comment type="subcellular location">
    <subcellularLocation>
        <location evidence="1">Host nucleus</location>
    </subcellularLocation>
    <text evidence="1">Found associated with the external surface of the viral capsid during assembly and DNA packaging, but seems absent in extracellular mature virions.</text>
</comment>
<comment type="similarity">
    <text evidence="1">Belongs to the herpesviridae TRM1 protein family.</text>
</comment>
<gene>
    <name evidence="1" type="primary">TRM1</name>
    <name type="ordered locus">U40</name>
</gene>
<name>TRM1_HHV6U</name>
<protein>
    <recommendedName>
        <fullName evidence="1">Tripartite terminase subunit 1</fullName>
    </recommendedName>
</protein>